<feature type="chain" id="PRO_0000160753" description="NAD-dependent alcohol dehydrogenase">
    <location>
        <begin position="1"/>
        <end position="347"/>
    </location>
</feature>
<feature type="binding site">
    <location>
        <position position="38"/>
    </location>
    <ligand>
        <name>Zn(2+)</name>
        <dbReference type="ChEBI" id="CHEBI:29105"/>
        <label>1</label>
        <note>catalytic</note>
    </ligand>
</feature>
<feature type="binding site">
    <location>
        <position position="68"/>
    </location>
    <ligand>
        <name>Zn(2+)</name>
        <dbReference type="ChEBI" id="CHEBI:29105"/>
        <label>1</label>
        <note>catalytic</note>
    </ligand>
</feature>
<feature type="binding site">
    <location>
        <position position="98"/>
    </location>
    <ligand>
        <name>Zn(2+)</name>
        <dbReference type="ChEBI" id="CHEBI:29105"/>
        <label>2</label>
    </ligand>
</feature>
<feature type="binding site">
    <location>
        <position position="101"/>
    </location>
    <ligand>
        <name>Zn(2+)</name>
        <dbReference type="ChEBI" id="CHEBI:29105"/>
        <label>2</label>
    </ligand>
</feature>
<feature type="binding site">
    <location>
        <position position="104"/>
    </location>
    <ligand>
        <name>Zn(2+)</name>
        <dbReference type="ChEBI" id="CHEBI:29105"/>
        <label>2</label>
    </ligand>
</feature>
<feature type="binding site">
    <location>
        <position position="112"/>
    </location>
    <ligand>
        <name>Zn(2+)</name>
        <dbReference type="ChEBI" id="CHEBI:29105"/>
        <label>2</label>
    </ligand>
</feature>
<feature type="binding site">
    <location>
        <position position="154"/>
    </location>
    <ligand>
        <name>Zn(2+)</name>
        <dbReference type="ChEBI" id="CHEBI:29105"/>
        <label>1</label>
        <note>catalytic</note>
    </ligand>
</feature>
<feature type="modified residue" description="N6-methyllysine; partial" evidence="2">
    <location>
        <position position="11"/>
    </location>
</feature>
<feature type="modified residue" description="N6-methyllysine; partial" evidence="2">
    <location>
        <position position="213"/>
    </location>
</feature>
<feature type="strand" evidence="4">
    <location>
        <begin position="2"/>
        <end position="6"/>
    </location>
</feature>
<feature type="strand" evidence="5">
    <location>
        <begin position="8"/>
        <end position="11"/>
    </location>
</feature>
<feature type="strand" evidence="4">
    <location>
        <begin position="14"/>
        <end position="17"/>
    </location>
</feature>
<feature type="strand" evidence="4">
    <location>
        <begin position="28"/>
        <end position="37"/>
    </location>
</feature>
<feature type="helix" evidence="4">
    <location>
        <begin position="40"/>
        <end position="44"/>
    </location>
</feature>
<feature type="turn" evidence="4">
    <location>
        <begin position="45"/>
        <end position="47"/>
    </location>
</feature>
<feature type="strand" evidence="6">
    <location>
        <begin position="49"/>
        <end position="52"/>
    </location>
</feature>
<feature type="turn" evidence="4">
    <location>
        <begin position="54"/>
        <end position="58"/>
    </location>
</feature>
<feature type="strand" evidence="5">
    <location>
        <begin position="62"/>
        <end position="65"/>
    </location>
</feature>
<feature type="strand" evidence="4">
    <location>
        <begin position="69"/>
        <end position="77"/>
    </location>
</feature>
<feature type="strand" evidence="4">
    <location>
        <begin position="89"/>
        <end position="92"/>
    </location>
</feature>
<feature type="strand" evidence="4">
    <location>
        <begin position="99"/>
        <end position="101"/>
    </location>
</feature>
<feature type="helix" evidence="4">
    <location>
        <begin position="102"/>
        <end position="105"/>
    </location>
</feature>
<feature type="helix" evidence="4">
    <location>
        <begin position="109"/>
        <end position="111"/>
    </location>
</feature>
<feature type="turn" evidence="4">
    <location>
        <begin position="118"/>
        <end position="120"/>
    </location>
</feature>
<feature type="strand" evidence="4">
    <location>
        <begin position="125"/>
        <end position="133"/>
    </location>
</feature>
<feature type="helix" evidence="4">
    <location>
        <begin position="135"/>
        <end position="137"/>
    </location>
</feature>
<feature type="strand" evidence="4">
    <location>
        <begin position="138"/>
        <end position="140"/>
    </location>
</feature>
<feature type="strand" evidence="4">
    <location>
        <begin position="142"/>
        <end position="144"/>
    </location>
</feature>
<feature type="helix" evidence="4">
    <location>
        <begin position="146"/>
        <end position="149"/>
    </location>
</feature>
<feature type="helix" evidence="4">
    <location>
        <begin position="150"/>
        <end position="153"/>
    </location>
</feature>
<feature type="helix" evidence="4">
    <location>
        <begin position="155"/>
        <end position="165"/>
    </location>
</feature>
<feature type="strand" evidence="4">
    <location>
        <begin position="173"/>
        <end position="177"/>
    </location>
</feature>
<feature type="turn" evidence="4">
    <location>
        <begin position="178"/>
        <end position="180"/>
    </location>
</feature>
<feature type="helix" evidence="4">
    <location>
        <begin position="182"/>
        <end position="194"/>
    </location>
</feature>
<feature type="strand" evidence="4">
    <location>
        <begin position="198"/>
        <end position="205"/>
    </location>
</feature>
<feature type="helix" evidence="4">
    <location>
        <begin position="206"/>
        <end position="215"/>
    </location>
</feature>
<feature type="strand" evidence="4">
    <location>
        <begin position="218"/>
        <end position="222"/>
    </location>
</feature>
<feature type="turn" evidence="4">
    <location>
        <begin position="223"/>
        <end position="225"/>
    </location>
</feature>
<feature type="helix" evidence="4">
    <location>
        <begin position="228"/>
        <end position="235"/>
    </location>
</feature>
<feature type="turn" evidence="4">
    <location>
        <begin position="236"/>
        <end position="238"/>
    </location>
</feature>
<feature type="strand" evidence="4">
    <location>
        <begin position="241"/>
        <end position="247"/>
    </location>
</feature>
<feature type="helix" evidence="4">
    <location>
        <begin position="251"/>
        <end position="254"/>
    </location>
</feature>
<feature type="helix" evidence="4">
    <location>
        <begin position="257"/>
        <end position="260"/>
    </location>
</feature>
<feature type="strand" evidence="4">
    <location>
        <begin position="261"/>
        <end position="269"/>
    </location>
</feature>
<feature type="strand" evidence="5">
    <location>
        <begin position="276"/>
        <end position="280"/>
    </location>
</feature>
<feature type="helix" evidence="4">
    <location>
        <begin position="281"/>
        <end position="287"/>
    </location>
</feature>
<feature type="strand" evidence="4">
    <location>
        <begin position="290"/>
        <end position="293"/>
    </location>
</feature>
<feature type="helix" evidence="4">
    <location>
        <begin position="299"/>
        <end position="310"/>
    </location>
</feature>
<feature type="strand" evidence="4">
    <location>
        <begin position="319"/>
        <end position="323"/>
    </location>
</feature>
<feature type="helix" evidence="4">
    <location>
        <begin position="324"/>
        <end position="326"/>
    </location>
</feature>
<feature type="helix" evidence="4">
    <location>
        <begin position="327"/>
        <end position="335"/>
    </location>
</feature>
<feature type="strand" evidence="4">
    <location>
        <begin position="341"/>
        <end position="346"/>
    </location>
</feature>
<name>ADH_SACS2</name>
<sequence length="347" mass="37569">MRAVRLVEIGKPLSLQEIGVPKPKGPQVLIKVEAAGVCHSDVHMRQGRFGNLRIVEDLGVKLPVTLGHEIAGKIEEVGDEVVGYSKGDLVAVNPWQGEGNCYYCRIGEEHLCDSPRWLGINFDGAYAEYVIVPHYKYMYKLRRLNAVEAAPLTCSGITTYRAVRKASLDPTKTLLVVGAGGGLGTMAVQIAKAVSGATIIGVDVREEAVEAAKRAGADYVINASMQDPLAEIRRITESKGVDAVIDLNNSEKTLSVYPKALAKQGKYVMVGLFGADLHYHAPLITLSEIQFVGSLVGNQSDFLGIMRLAEAGKVKPMITKTMKLEEANEAIDNLENFKAIGRQVLIP</sequence>
<keyword id="KW-0002">3D-structure</keyword>
<keyword id="KW-0903">Direct protein sequencing</keyword>
<keyword id="KW-0479">Metal-binding</keyword>
<keyword id="KW-0488">Methylation</keyword>
<keyword id="KW-0520">NAD</keyword>
<keyword id="KW-0560">Oxidoreductase</keyword>
<keyword id="KW-1185">Reference proteome</keyword>
<keyword id="KW-0862">Zinc</keyword>
<proteinExistence type="evidence at protein level"/>
<organism>
    <name type="scientific">Saccharolobus solfataricus (strain ATCC 35092 / DSM 1617 / JCM 11322 / P2)</name>
    <name type="common">Sulfolobus solfataricus</name>
    <dbReference type="NCBI Taxonomy" id="273057"/>
    <lineage>
        <taxon>Archaea</taxon>
        <taxon>Thermoproteota</taxon>
        <taxon>Thermoprotei</taxon>
        <taxon>Sulfolobales</taxon>
        <taxon>Sulfolobaceae</taxon>
        <taxon>Saccharolobus</taxon>
    </lineage>
</organism>
<comment type="catalytic activity">
    <reaction>
        <text>a primary alcohol + NAD(+) = an aldehyde + NADH + H(+)</text>
        <dbReference type="Rhea" id="RHEA:10736"/>
        <dbReference type="ChEBI" id="CHEBI:15378"/>
        <dbReference type="ChEBI" id="CHEBI:15734"/>
        <dbReference type="ChEBI" id="CHEBI:17478"/>
        <dbReference type="ChEBI" id="CHEBI:57540"/>
        <dbReference type="ChEBI" id="CHEBI:57945"/>
        <dbReference type="EC" id="1.1.1.1"/>
    </reaction>
</comment>
<comment type="catalytic activity">
    <reaction>
        <text>a secondary alcohol + NAD(+) = a ketone + NADH + H(+)</text>
        <dbReference type="Rhea" id="RHEA:10740"/>
        <dbReference type="ChEBI" id="CHEBI:15378"/>
        <dbReference type="ChEBI" id="CHEBI:17087"/>
        <dbReference type="ChEBI" id="CHEBI:35681"/>
        <dbReference type="ChEBI" id="CHEBI:57540"/>
        <dbReference type="ChEBI" id="CHEBI:57945"/>
        <dbReference type="EC" id="1.1.1.1"/>
    </reaction>
</comment>
<comment type="cofactor">
    <cofactor evidence="1">
        <name>Zn(2+)</name>
        <dbReference type="ChEBI" id="CHEBI:29105"/>
    </cofactor>
    <text evidence="1">Binds 2 Zn(2+) ions per subunit.</text>
</comment>
<comment type="subunit">
    <text>Homodimer and homotetramer.</text>
</comment>
<comment type="similarity">
    <text evidence="3">Belongs to the zinc-containing alcohol dehydrogenase family.</text>
</comment>
<accession>P39462</accession>
<accession>O74076</accession>
<evidence type="ECO:0000250" key="1"/>
<evidence type="ECO:0000269" key="2">
    <source>
    </source>
</evidence>
<evidence type="ECO:0000305" key="3"/>
<evidence type="ECO:0007829" key="4">
    <source>
        <dbReference type="PDB" id="1JVB"/>
    </source>
</evidence>
<evidence type="ECO:0007829" key="5">
    <source>
        <dbReference type="PDB" id="1NTO"/>
    </source>
</evidence>
<evidence type="ECO:0007829" key="6">
    <source>
        <dbReference type="PDB" id="1NVG"/>
    </source>
</evidence>
<dbReference type="EC" id="1.1.1.1"/>
<dbReference type="EMBL" id="S51211">
    <property type="protein sequence ID" value="AAB24546.1"/>
    <property type="molecule type" value="Genomic_DNA"/>
</dbReference>
<dbReference type="EMBL" id="AJ010590">
    <property type="protein sequence ID" value="CAA09258.1"/>
    <property type="molecule type" value="Genomic_DNA"/>
</dbReference>
<dbReference type="EMBL" id="AE006641">
    <property type="protein sequence ID" value="AAK42665.1"/>
    <property type="molecule type" value="Genomic_DNA"/>
</dbReference>
<dbReference type="PIR" id="A44245">
    <property type="entry name" value="A44245"/>
</dbReference>
<dbReference type="RefSeq" id="WP_009990984.1">
    <property type="nucleotide sequence ID" value="NC_002754.1"/>
</dbReference>
<dbReference type="PDB" id="1JVB">
    <property type="method" value="X-ray"/>
    <property type="resolution" value="1.85 A"/>
    <property type="chains" value="A=1-347"/>
</dbReference>
<dbReference type="PDB" id="1NTO">
    <property type="method" value="X-ray"/>
    <property type="resolution" value="1.94 A"/>
    <property type="chains" value="A/B/C/D/E/H=1-347"/>
</dbReference>
<dbReference type="PDB" id="1NVG">
    <property type="method" value="X-ray"/>
    <property type="resolution" value="2.50 A"/>
    <property type="chains" value="A=1-347"/>
</dbReference>
<dbReference type="PDB" id="1R37">
    <property type="method" value="X-ray"/>
    <property type="resolution" value="2.30 A"/>
    <property type="chains" value="A/B=1-347"/>
</dbReference>
<dbReference type="PDB" id="3I4C">
    <property type="method" value="X-ray"/>
    <property type="resolution" value="2.00 A"/>
    <property type="chains" value="A/B/C/D/E/H=1-347"/>
</dbReference>
<dbReference type="PDBsum" id="1JVB"/>
<dbReference type="PDBsum" id="1NTO"/>
<dbReference type="PDBsum" id="1NVG"/>
<dbReference type="PDBsum" id="1R37"/>
<dbReference type="PDBsum" id="3I4C"/>
<dbReference type="SMR" id="P39462"/>
<dbReference type="FunCoup" id="P39462">
    <property type="interactions" value="122"/>
</dbReference>
<dbReference type="STRING" id="273057.SSO2536"/>
<dbReference type="iPTMnet" id="P39462"/>
<dbReference type="PaxDb" id="273057-SSO2536"/>
<dbReference type="EnsemblBacteria" id="AAK42665">
    <property type="protein sequence ID" value="AAK42665"/>
    <property type="gene ID" value="SSO2536"/>
</dbReference>
<dbReference type="KEGG" id="sso:SSO2536"/>
<dbReference type="PATRIC" id="fig|273057.12.peg.2612"/>
<dbReference type="eggNOG" id="arCOG01455">
    <property type="taxonomic scope" value="Archaea"/>
</dbReference>
<dbReference type="HOGENOM" id="CLU_026673_11_2_2"/>
<dbReference type="InParanoid" id="P39462"/>
<dbReference type="PhylomeDB" id="P39462"/>
<dbReference type="BRENDA" id="1.1.1.1">
    <property type="organism ID" value="6163"/>
</dbReference>
<dbReference type="SABIO-RK" id="P39462"/>
<dbReference type="EvolutionaryTrace" id="P39462"/>
<dbReference type="Proteomes" id="UP000001974">
    <property type="component" value="Chromosome"/>
</dbReference>
<dbReference type="GO" id="GO:0004022">
    <property type="term" value="F:alcohol dehydrogenase (NAD+) activity"/>
    <property type="evidence" value="ECO:0007669"/>
    <property type="project" value="UniProtKB-EC"/>
</dbReference>
<dbReference type="GO" id="GO:0008270">
    <property type="term" value="F:zinc ion binding"/>
    <property type="evidence" value="ECO:0007669"/>
    <property type="project" value="InterPro"/>
</dbReference>
<dbReference type="CDD" id="cd05284">
    <property type="entry name" value="arabinose_DH_like"/>
    <property type="match status" value="1"/>
</dbReference>
<dbReference type="Gene3D" id="3.90.180.10">
    <property type="entry name" value="Medium-chain alcohol dehydrogenases, catalytic domain"/>
    <property type="match status" value="1"/>
</dbReference>
<dbReference type="Gene3D" id="3.40.50.720">
    <property type="entry name" value="NAD(P)-binding Rossmann-like Domain"/>
    <property type="match status" value="1"/>
</dbReference>
<dbReference type="InterPro" id="IPR013149">
    <property type="entry name" value="ADH-like_C"/>
</dbReference>
<dbReference type="InterPro" id="IPR013154">
    <property type="entry name" value="ADH-like_N"/>
</dbReference>
<dbReference type="InterPro" id="IPR002328">
    <property type="entry name" value="ADH_Zn_CS"/>
</dbReference>
<dbReference type="InterPro" id="IPR011032">
    <property type="entry name" value="GroES-like_sf"/>
</dbReference>
<dbReference type="InterPro" id="IPR036291">
    <property type="entry name" value="NAD(P)-bd_dom_sf"/>
</dbReference>
<dbReference type="InterPro" id="IPR020843">
    <property type="entry name" value="PKS_ER"/>
</dbReference>
<dbReference type="PANTHER" id="PTHR42940">
    <property type="entry name" value="ALCOHOL DEHYDROGENASE 1-RELATED"/>
    <property type="match status" value="1"/>
</dbReference>
<dbReference type="PANTHER" id="PTHR42940:SF8">
    <property type="entry name" value="VACUOLAR PROTEIN SORTING-ASSOCIATED PROTEIN 11"/>
    <property type="match status" value="1"/>
</dbReference>
<dbReference type="Pfam" id="PF08240">
    <property type="entry name" value="ADH_N"/>
    <property type="match status" value="1"/>
</dbReference>
<dbReference type="Pfam" id="PF00107">
    <property type="entry name" value="ADH_zinc_N"/>
    <property type="match status" value="1"/>
</dbReference>
<dbReference type="SMART" id="SM00829">
    <property type="entry name" value="PKS_ER"/>
    <property type="match status" value="1"/>
</dbReference>
<dbReference type="SUPFAM" id="SSF50129">
    <property type="entry name" value="GroES-like"/>
    <property type="match status" value="1"/>
</dbReference>
<dbReference type="SUPFAM" id="SSF51735">
    <property type="entry name" value="NAD(P)-binding Rossmann-fold domains"/>
    <property type="match status" value="1"/>
</dbReference>
<dbReference type="PROSITE" id="PS00059">
    <property type="entry name" value="ADH_ZINC"/>
    <property type="match status" value="1"/>
</dbReference>
<protein>
    <recommendedName>
        <fullName>NAD-dependent alcohol dehydrogenase</fullName>
        <ecNumber>1.1.1.1</ecNumber>
    </recommendedName>
</protein>
<gene>
    <name type="primary">adh</name>
    <name type="ordered locus">SSO2536</name>
</gene>
<reference key="1">
    <citation type="journal article" date="1992" name="Biochemistry">
        <title>Thermostable NAD(+)-dependent alcohol dehydrogenase from Sulfolobus solfataricus: gene and protein sequence determination and relationship to other alcohol dehydrogenases.</title>
        <authorList>
            <person name="Ammendola S."/>
            <person name="Raia C.A."/>
            <person name="Caruso C."/>
            <person name="Camardella L."/>
            <person name="D'Auria S."/>
            <person name="de Rosa M."/>
            <person name="Rossi M."/>
        </authorList>
    </citation>
    <scope>NUCLEOTIDE SEQUENCE [GENOMIC DNA]</scope>
    <scope>METHYLATION AT LYS-11 AND LYS-213</scope>
    <scope>PARTIAL PROTEIN SEQUENCE</scope>
    <source>
        <strain>ATCC 35092 / DSM 1617 / JCM 11322 / P2</strain>
    </source>
</reference>
<reference key="2">
    <citation type="submission" date="1998-08" db="EMBL/GenBank/DDBJ databases">
        <authorList>
            <person name="Aravalli R.N."/>
        </authorList>
    </citation>
    <scope>NUCLEOTIDE SEQUENCE [GENOMIC DNA]</scope>
    <source>
        <strain>ATCC 35092 / DSM 1617 / JCM 11322 / P2</strain>
    </source>
</reference>
<reference key="3">
    <citation type="journal article" date="2001" name="Proc. Natl. Acad. Sci. U.S.A.">
        <title>The complete genome of the crenarchaeon Sulfolobus solfataricus P2.</title>
        <authorList>
            <person name="She Q."/>
            <person name="Singh R.K."/>
            <person name="Confalonieri F."/>
            <person name="Zivanovic Y."/>
            <person name="Allard G."/>
            <person name="Awayez M.J."/>
            <person name="Chan-Weiher C.C.-Y."/>
            <person name="Clausen I.G."/>
            <person name="Curtis B.A."/>
            <person name="De Moors A."/>
            <person name="Erauso G."/>
            <person name="Fletcher C."/>
            <person name="Gordon P.M.K."/>
            <person name="Heikamp-de Jong I."/>
            <person name="Jeffries A.C."/>
            <person name="Kozera C.J."/>
            <person name="Medina N."/>
            <person name="Peng X."/>
            <person name="Thi-Ngoc H.P."/>
            <person name="Redder P."/>
            <person name="Schenk M.E."/>
            <person name="Theriault C."/>
            <person name="Tolstrup N."/>
            <person name="Charlebois R.L."/>
            <person name="Doolittle W.F."/>
            <person name="Duguet M."/>
            <person name="Gaasterland T."/>
            <person name="Garrett R.A."/>
            <person name="Ragan M.A."/>
            <person name="Sensen C.W."/>
            <person name="Van der Oost J."/>
        </authorList>
    </citation>
    <scope>NUCLEOTIDE SEQUENCE [LARGE SCALE GENOMIC DNA]</scope>
    <source>
        <strain>ATCC 35092 / DSM 1617 / JCM 11322 / P2</strain>
    </source>
</reference>
<reference key="4">
    <citation type="journal article" date="2002" name="J. Mol. Biol.">
        <title>Crystal structure of the alcohol dehydrogenase from the hyperthermophilic archaeon Sulfolobus solfataricus at 1.85 A resolution.</title>
        <authorList>
            <person name="Esposito L."/>
            <person name="Sica F."/>
            <person name="Raia C.A."/>
            <person name="Giordano A."/>
            <person name="Rossi M."/>
            <person name="Mazzarella L."/>
            <person name="Zagari A."/>
        </authorList>
    </citation>
    <scope>X-RAY CRYSTALLOGRAPHY (1.85 ANGSTROMS)</scope>
</reference>